<name>SUB2_CRYNJ</name>
<gene>
    <name type="primary">SUB2</name>
    <name type="ordered locus">CNA07200</name>
</gene>
<evidence type="ECO:0000250" key="1"/>
<evidence type="ECO:0000255" key="2">
    <source>
        <dbReference type="PROSITE-ProRule" id="PRU00541"/>
    </source>
</evidence>
<evidence type="ECO:0000255" key="3">
    <source>
        <dbReference type="PROSITE-ProRule" id="PRU00542"/>
    </source>
</evidence>
<evidence type="ECO:0000305" key="4"/>
<reference key="1">
    <citation type="journal article" date="2005" name="Science">
        <title>The genome of the basidiomycetous yeast and human pathogen Cryptococcus neoformans.</title>
        <authorList>
            <person name="Loftus B.J."/>
            <person name="Fung E."/>
            <person name="Roncaglia P."/>
            <person name="Rowley D."/>
            <person name="Amedeo P."/>
            <person name="Bruno D."/>
            <person name="Vamathevan J."/>
            <person name="Miranda M."/>
            <person name="Anderson I.J."/>
            <person name="Fraser J.A."/>
            <person name="Allen J.E."/>
            <person name="Bosdet I.E."/>
            <person name="Brent M.R."/>
            <person name="Chiu R."/>
            <person name="Doering T.L."/>
            <person name="Donlin M.J."/>
            <person name="D'Souza C.A."/>
            <person name="Fox D.S."/>
            <person name="Grinberg V."/>
            <person name="Fu J."/>
            <person name="Fukushima M."/>
            <person name="Haas B.J."/>
            <person name="Huang J.C."/>
            <person name="Janbon G."/>
            <person name="Jones S.J.M."/>
            <person name="Koo H.L."/>
            <person name="Krzywinski M.I."/>
            <person name="Kwon-Chung K.J."/>
            <person name="Lengeler K.B."/>
            <person name="Maiti R."/>
            <person name="Marra M.A."/>
            <person name="Marra R.E."/>
            <person name="Mathewson C.A."/>
            <person name="Mitchell T.G."/>
            <person name="Pertea M."/>
            <person name="Riggs F.R."/>
            <person name="Salzberg S.L."/>
            <person name="Schein J.E."/>
            <person name="Shvartsbeyn A."/>
            <person name="Shin H."/>
            <person name="Shumway M."/>
            <person name="Specht C.A."/>
            <person name="Suh B.B."/>
            <person name="Tenney A."/>
            <person name="Utterback T.R."/>
            <person name="Wickes B.L."/>
            <person name="Wortman J.R."/>
            <person name="Wye N.H."/>
            <person name="Kronstad J.W."/>
            <person name="Lodge J.K."/>
            <person name="Heitman J."/>
            <person name="Davis R.W."/>
            <person name="Fraser C.M."/>
            <person name="Hyman R.W."/>
        </authorList>
    </citation>
    <scope>NUCLEOTIDE SEQUENCE [LARGE SCALE GENOMIC DNA]</scope>
    <source>
        <strain>JEC21 / ATCC MYA-565</strain>
    </source>
</reference>
<proteinExistence type="inferred from homology"/>
<feature type="chain" id="PRO_0000232263" description="ATP-dependent RNA helicase SUB2">
    <location>
        <begin position="1"/>
        <end position="442"/>
    </location>
</feature>
<feature type="domain" description="Helicase ATP-binding" evidence="2">
    <location>
        <begin position="90"/>
        <end position="265"/>
    </location>
</feature>
<feature type="domain" description="Helicase C-terminal" evidence="3">
    <location>
        <begin position="277"/>
        <end position="438"/>
    </location>
</feature>
<feature type="short sequence motif" description="Q motif">
    <location>
        <begin position="59"/>
        <end position="87"/>
    </location>
</feature>
<feature type="short sequence motif" description="DECD box">
    <location>
        <begin position="212"/>
        <end position="215"/>
    </location>
</feature>
<feature type="binding site" evidence="2">
    <location>
        <begin position="103"/>
        <end position="110"/>
    </location>
    <ligand>
        <name>ATP</name>
        <dbReference type="ChEBI" id="CHEBI:30616"/>
    </ligand>
</feature>
<sequence>MINSTNLNLTIKMSRPDEEELVDYDEAAEEILPPAPAAETNGDKADGDKKGSYVGIHSTGFRDFLLKPELLRAISDLGFEHPSEVQQECIPQAILGTDVLCQAKSGMGKTAVFVLAALQQIEPVDGEVSIIILCHTRELAYQIKNEFTRFSKFMTNVRTGVFYGGTPISADQEILANKEKCPHIVVGTPGRTMALVRDKKLNASKVKHFVLDECDKMLEQLDMRRDVQEIFRATPHHKQVMMFSATLSKDIRATCKKFMQSPLEIYVDDETKLTLHGLQQFYLKLEEREKNRKLNDLLDNLEFNQVCIFVKSVQRATQLDALLQECNFPSICIHSGLQQAERISRFQQFKAFEKRILVATDIFGRGIDVERVNVVINYDAPSDADSYLHRVGRAGRFGTKGLAISFVSSDADQEVLQRIQERFTVAIPTLPETVDPATYMTS</sequence>
<comment type="function">
    <text evidence="1">ATP-binding RNA helicase involved in transcription elongation and required for the export of mRNA out of the nucleus. SUB2 also plays a role in pre-mRNA splicing and spliceosome assembly. May be involved in rDNA and telomeric silencing, and maintenance of genome integrity (By similarity).</text>
</comment>
<comment type="catalytic activity">
    <reaction>
        <text>ATP + H2O = ADP + phosphate + H(+)</text>
        <dbReference type="Rhea" id="RHEA:13065"/>
        <dbReference type="ChEBI" id="CHEBI:15377"/>
        <dbReference type="ChEBI" id="CHEBI:15378"/>
        <dbReference type="ChEBI" id="CHEBI:30616"/>
        <dbReference type="ChEBI" id="CHEBI:43474"/>
        <dbReference type="ChEBI" id="CHEBI:456216"/>
        <dbReference type="EC" id="3.6.4.13"/>
    </reaction>
</comment>
<comment type="subcellular location">
    <subcellularLocation>
        <location evidence="1">Nucleus</location>
    </subcellularLocation>
</comment>
<comment type="domain">
    <text>The Q motif is unique to and characteristic of the DEAD box family of RNA helicases and controls ATP binding and hydrolysis.</text>
</comment>
<comment type="similarity">
    <text evidence="4">Belongs to the DEAD box helicase family. DECD subfamily.</text>
</comment>
<comment type="sequence caution" evidence="4">
    <conflict type="erroneous initiation">
        <sequence resource="EMBL-CDS" id="AAW41219"/>
    </conflict>
    <text>Truncated N-terminus.</text>
</comment>
<protein>
    <recommendedName>
        <fullName>ATP-dependent RNA helicase SUB2</fullName>
        <ecNumber>3.6.4.13</ecNumber>
    </recommendedName>
</protein>
<keyword id="KW-0067">ATP-binding</keyword>
<keyword id="KW-0347">Helicase</keyword>
<keyword id="KW-0378">Hydrolase</keyword>
<keyword id="KW-0507">mRNA processing</keyword>
<keyword id="KW-0508">mRNA splicing</keyword>
<keyword id="KW-0509">mRNA transport</keyword>
<keyword id="KW-0547">Nucleotide-binding</keyword>
<keyword id="KW-0539">Nucleus</keyword>
<keyword id="KW-1185">Reference proteome</keyword>
<keyword id="KW-0694">RNA-binding</keyword>
<keyword id="KW-0747">Spliceosome</keyword>
<keyword id="KW-0813">Transport</keyword>
<dbReference type="EC" id="3.6.4.13"/>
<dbReference type="EMBL" id="AE017341">
    <property type="protein sequence ID" value="AAW41218.1"/>
    <property type="molecule type" value="Genomic_DNA"/>
</dbReference>
<dbReference type="EMBL" id="AE017341">
    <property type="protein sequence ID" value="AAW41219.1"/>
    <property type="status" value="ALT_INIT"/>
    <property type="molecule type" value="Genomic_DNA"/>
</dbReference>
<dbReference type="RefSeq" id="XP_567037.1">
    <property type="nucleotide sequence ID" value="XM_567037.1"/>
</dbReference>
<dbReference type="RefSeq" id="XP_567038.1">
    <property type="nucleotide sequence ID" value="XM_567038.1"/>
</dbReference>
<dbReference type="SMR" id="P0CQ96"/>
<dbReference type="FunCoup" id="P0CQ96">
    <property type="interactions" value="787"/>
</dbReference>
<dbReference type="STRING" id="214684.P0CQ96"/>
<dbReference type="PaxDb" id="214684-P0CQ96"/>
<dbReference type="EnsemblFungi" id="AAW41218">
    <property type="protein sequence ID" value="AAW41218"/>
    <property type="gene ID" value="CNA07200"/>
</dbReference>
<dbReference type="GeneID" id="3253478"/>
<dbReference type="KEGG" id="cne:CNA07200"/>
<dbReference type="VEuPathDB" id="FungiDB:CNA07200"/>
<dbReference type="eggNOG" id="KOG0329">
    <property type="taxonomic scope" value="Eukaryota"/>
</dbReference>
<dbReference type="InParanoid" id="P0CQ96"/>
<dbReference type="OMA" id="YAHVEPK"/>
<dbReference type="OrthoDB" id="10265785at2759"/>
<dbReference type="Proteomes" id="UP000002149">
    <property type="component" value="Chromosome 1"/>
</dbReference>
<dbReference type="GO" id="GO:0005681">
    <property type="term" value="C:spliceosomal complex"/>
    <property type="evidence" value="ECO:0007669"/>
    <property type="project" value="UniProtKB-KW"/>
</dbReference>
<dbReference type="GO" id="GO:0005524">
    <property type="term" value="F:ATP binding"/>
    <property type="evidence" value="ECO:0007669"/>
    <property type="project" value="UniProtKB-KW"/>
</dbReference>
<dbReference type="GO" id="GO:0016887">
    <property type="term" value="F:ATP hydrolysis activity"/>
    <property type="evidence" value="ECO:0007669"/>
    <property type="project" value="RHEA"/>
</dbReference>
<dbReference type="GO" id="GO:0003729">
    <property type="term" value="F:mRNA binding"/>
    <property type="evidence" value="ECO:0000318"/>
    <property type="project" value="GO_Central"/>
</dbReference>
<dbReference type="GO" id="GO:0003724">
    <property type="term" value="F:RNA helicase activity"/>
    <property type="evidence" value="ECO:0000318"/>
    <property type="project" value="GO_Central"/>
</dbReference>
<dbReference type="GO" id="GO:0006406">
    <property type="term" value="P:mRNA export from nucleus"/>
    <property type="evidence" value="ECO:0000318"/>
    <property type="project" value="GO_Central"/>
</dbReference>
<dbReference type="GO" id="GO:0000398">
    <property type="term" value="P:mRNA splicing, via spliceosome"/>
    <property type="evidence" value="ECO:0000318"/>
    <property type="project" value="GO_Central"/>
</dbReference>
<dbReference type="CDD" id="cd17950">
    <property type="entry name" value="DEADc_DDX39"/>
    <property type="match status" value="1"/>
</dbReference>
<dbReference type="CDD" id="cd18787">
    <property type="entry name" value="SF2_C_DEAD"/>
    <property type="match status" value="1"/>
</dbReference>
<dbReference type="FunFam" id="3.40.50.300:FF:000111">
    <property type="entry name" value="DEAD-box ATP-dependent RNA helicase"/>
    <property type="match status" value="1"/>
</dbReference>
<dbReference type="FunFam" id="3.40.50.300:FF:000168">
    <property type="entry name" value="DEAD-box ATP-dependent RNA helicase 56-like"/>
    <property type="match status" value="1"/>
</dbReference>
<dbReference type="Gene3D" id="3.40.50.300">
    <property type="entry name" value="P-loop containing nucleotide triphosphate hydrolases"/>
    <property type="match status" value="2"/>
</dbReference>
<dbReference type="InterPro" id="IPR011545">
    <property type="entry name" value="DEAD/DEAH_box_helicase_dom"/>
</dbReference>
<dbReference type="InterPro" id="IPR014001">
    <property type="entry name" value="Helicase_ATP-bd"/>
</dbReference>
<dbReference type="InterPro" id="IPR001650">
    <property type="entry name" value="Helicase_C-like"/>
</dbReference>
<dbReference type="InterPro" id="IPR027417">
    <property type="entry name" value="P-loop_NTPase"/>
</dbReference>
<dbReference type="InterPro" id="IPR014014">
    <property type="entry name" value="RNA_helicase_DEAD_Q_motif"/>
</dbReference>
<dbReference type="PANTHER" id="PTHR47958">
    <property type="entry name" value="ATP-DEPENDENT RNA HELICASE DBP3"/>
    <property type="match status" value="1"/>
</dbReference>
<dbReference type="Pfam" id="PF00270">
    <property type="entry name" value="DEAD"/>
    <property type="match status" value="1"/>
</dbReference>
<dbReference type="Pfam" id="PF00271">
    <property type="entry name" value="Helicase_C"/>
    <property type="match status" value="1"/>
</dbReference>
<dbReference type="SMART" id="SM00487">
    <property type="entry name" value="DEXDc"/>
    <property type="match status" value="1"/>
</dbReference>
<dbReference type="SMART" id="SM00490">
    <property type="entry name" value="HELICc"/>
    <property type="match status" value="1"/>
</dbReference>
<dbReference type="SUPFAM" id="SSF52540">
    <property type="entry name" value="P-loop containing nucleoside triphosphate hydrolases"/>
    <property type="match status" value="1"/>
</dbReference>
<dbReference type="PROSITE" id="PS51192">
    <property type="entry name" value="HELICASE_ATP_BIND_1"/>
    <property type="match status" value="1"/>
</dbReference>
<dbReference type="PROSITE" id="PS51194">
    <property type="entry name" value="HELICASE_CTER"/>
    <property type="match status" value="1"/>
</dbReference>
<dbReference type="PROSITE" id="PS51195">
    <property type="entry name" value="Q_MOTIF"/>
    <property type="match status" value="1"/>
</dbReference>
<accession>P0CQ96</accession>
<accession>Q55YY7</accession>
<accession>Q5KNA2</accession>
<accession>Q5KNA3</accession>
<organism>
    <name type="scientific">Cryptococcus neoformans var. neoformans serotype D (strain JEC21 / ATCC MYA-565)</name>
    <name type="common">Filobasidiella neoformans</name>
    <dbReference type="NCBI Taxonomy" id="214684"/>
    <lineage>
        <taxon>Eukaryota</taxon>
        <taxon>Fungi</taxon>
        <taxon>Dikarya</taxon>
        <taxon>Basidiomycota</taxon>
        <taxon>Agaricomycotina</taxon>
        <taxon>Tremellomycetes</taxon>
        <taxon>Tremellales</taxon>
        <taxon>Cryptococcaceae</taxon>
        <taxon>Cryptococcus</taxon>
        <taxon>Cryptococcus neoformans species complex</taxon>
    </lineage>
</organism>